<dbReference type="EMBL" id="AM114397">
    <property type="protein sequence ID" value="CAJ38273.1"/>
    <property type="molecule type" value="Genomic_DNA"/>
</dbReference>
<dbReference type="SMR" id="Q257X2"/>
<dbReference type="STRING" id="9925.ENSCHIP00000021235"/>
<dbReference type="Ensembl" id="ENSCHIT00000029093.1">
    <property type="protein sequence ID" value="ENSCHIP00000021250.1"/>
    <property type="gene ID" value="ENSCHIG00000019616.1"/>
</dbReference>
<dbReference type="Ensembl" id="ENSCHIT00020004110">
    <property type="protein sequence ID" value="ENSCHIP00020003100"/>
    <property type="gene ID" value="ENSCHIG00020001919"/>
</dbReference>
<dbReference type="Ensembl" id="ENSCHIT00040005352">
    <property type="protein sequence ID" value="ENSCHIP00040004270"/>
    <property type="gene ID" value="ENSCHIG00040002411"/>
</dbReference>
<dbReference type="GeneTree" id="ENSGT00390000011772"/>
<dbReference type="OMA" id="MRCGPLC"/>
<dbReference type="Proteomes" id="UP000291000">
    <property type="component" value="Chromosome 4"/>
</dbReference>
<dbReference type="Proteomes" id="UP000694566">
    <property type="component" value="Unplaced"/>
</dbReference>
<dbReference type="Bgee" id="ENSCHIG00000019616">
    <property type="expression patterns" value="Expressed in skin of neck and 2 other cell types or tissues"/>
</dbReference>
<dbReference type="GO" id="GO:0005615">
    <property type="term" value="C:extracellular space"/>
    <property type="evidence" value="ECO:0007669"/>
    <property type="project" value="TreeGrafter"/>
</dbReference>
<dbReference type="GO" id="GO:0005179">
    <property type="term" value="F:hormone activity"/>
    <property type="evidence" value="ECO:0007669"/>
    <property type="project" value="InterPro"/>
</dbReference>
<dbReference type="GO" id="GO:0051428">
    <property type="term" value="F:peptide hormone receptor binding"/>
    <property type="evidence" value="ECO:0007669"/>
    <property type="project" value="TreeGrafter"/>
</dbReference>
<dbReference type="GO" id="GO:1990051">
    <property type="term" value="P:activation of protein kinase C activity"/>
    <property type="evidence" value="ECO:0000250"/>
    <property type="project" value="UniProtKB"/>
</dbReference>
<dbReference type="GO" id="GO:0098868">
    <property type="term" value="P:bone growth"/>
    <property type="evidence" value="ECO:0000250"/>
    <property type="project" value="UniProtKB"/>
</dbReference>
<dbReference type="GO" id="GO:0044320">
    <property type="term" value="P:cellular response to leptin stimulus"/>
    <property type="evidence" value="ECO:0000250"/>
    <property type="project" value="UniProtKB"/>
</dbReference>
<dbReference type="GO" id="GO:0006112">
    <property type="term" value="P:energy reserve metabolic process"/>
    <property type="evidence" value="ECO:0007669"/>
    <property type="project" value="TreeGrafter"/>
</dbReference>
<dbReference type="GO" id="GO:0050892">
    <property type="term" value="P:intestinal absorption"/>
    <property type="evidence" value="ECO:0000250"/>
    <property type="project" value="UniProtKB"/>
</dbReference>
<dbReference type="GO" id="GO:0033210">
    <property type="term" value="P:leptin-mediated signaling pathway"/>
    <property type="evidence" value="ECO:0000250"/>
    <property type="project" value="UniProtKB"/>
</dbReference>
<dbReference type="GO" id="GO:0006629">
    <property type="term" value="P:lipid metabolic process"/>
    <property type="evidence" value="ECO:0007669"/>
    <property type="project" value="TreeGrafter"/>
</dbReference>
<dbReference type="GO" id="GO:0038108">
    <property type="term" value="P:negative regulation of appetite by leptin-mediated signaling pathway"/>
    <property type="evidence" value="ECO:0000250"/>
    <property type="project" value="UniProtKB"/>
</dbReference>
<dbReference type="GO" id="GO:0010507">
    <property type="term" value="P:negative regulation of autophagy"/>
    <property type="evidence" value="ECO:0000250"/>
    <property type="project" value="UniProtKB"/>
</dbReference>
<dbReference type="GO" id="GO:0046325">
    <property type="term" value="P:negative regulation of D-glucose import"/>
    <property type="evidence" value="ECO:0000250"/>
    <property type="project" value="UniProtKB"/>
</dbReference>
<dbReference type="GO" id="GO:0006909">
    <property type="term" value="P:phagocytosis"/>
    <property type="evidence" value="ECO:0000250"/>
    <property type="project" value="UniProtKB"/>
</dbReference>
<dbReference type="GO" id="GO:0032735">
    <property type="term" value="P:positive regulation of interleukin-12 production"/>
    <property type="evidence" value="ECO:0000250"/>
    <property type="project" value="UniProtKB"/>
</dbReference>
<dbReference type="GO" id="GO:0032755">
    <property type="term" value="P:positive regulation of interleukin-6 production"/>
    <property type="evidence" value="ECO:0000250"/>
    <property type="project" value="UniProtKB"/>
</dbReference>
<dbReference type="GO" id="GO:0032757">
    <property type="term" value="P:positive regulation of interleukin-8 production"/>
    <property type="evidence" value="ECO:0000250"/>
    <property type="project" value="UniProtKB"/>
</dbReference>
<dbReference type="GO" id="GO:0043410">
    <property type="term" value="P:positive regulation of MAPK cascade"/>
    <property type="evidence" value="ECO:0000250"/>
    <property type="project" value="UniProtKB"/>
</dbReference>
<dbReference type="GO" id="GO:1900745">
    <property type="term" value="P:positive regulation of p38MAPK cascade"/>
    <property type="evidence" value="ECO:0000250"/>
    <property type="project" value="UniProtKB"/>
</dbReference>
<dbReference type="GO" id="GO:0051897">
    <property type="term" value="P:positive regulation of phosphatidylinositol 3-kinase/protein kinase B signal transduction"/>
    <property type="evidence" value="ECO:0000250"/>
    <property type="project" value="UniProtKB"/>
</dbReference>
<dbReference type="GO" id="GO:0046427">
    <property type="term" value="P:positive regulation of receptor signaling pathway via JAK-STAT"/>
    <property type="evidence" value="ECO:0000250"/>
    <property type="project" value="UniProtKB"/>
</dbReference>
<dbReference type="GO" id="GO:0042102">
    <property type="term" value="P:positive regulation of T cell proliferation"/>
    <property type="evidence" value="ECO:0000250"/>
    <property type="project" value="UniProtKB"/>
</dbReference>
<dbReference type="GO" id="GO:0032008">
    <property type="term" value="P:positive regulation of TOR signaling"/>
    <property type="evidence" value="ECO:0000250"/>
    <property type="project" value="UniProtKB"/>
</dbReference>
<dbReference type="GO" id="GO:0032760">
    <property type="term" value="P:positive regulation of tumor necrosis factor production"/>
    <property type="evidence" value="ECO:0000250"/>
    <property type="project" value="UniProtKB"/>
</dbReference>
<dbReference type="GO" id="GO:0032310">
    <property type="term" value="P:prostaglandin secretion"/>
    <property type="evidence" value="ECO:0000250"/>
    <property type="project" value="UniProtKB"/>
</dbReference>
<dbReference type="GO" id="GO:0045765">
    <property type="term" value="P:regulation of angiogenesis"/>
    <property type="evidence" value="ECO:0000250"/>
    <property type="project" value="UniProtKB"/>
</dbReference>
<dbReference type="GO" id="GO:0046850">
    <property type="term" value="P:regulation of bone remodeling"/>
    <property type="evidence" value="ECO:0000250"/>
    <property type="project" value="UniProtKB"/>
</dbReference>
<dbReference type="GO" id="GO:0090335">
    <property type="term" value="P:regulation of brown fat cell differentiation"/>
    <property type="evidence" value="ECO:0000250"/>
    <property type="project" value="UniProtKB"/>
</dbReference>
<dbReference type="GO" id="GO:0051726">
    <property type="term" value="P:regulation of cell cycle"/>
    <property type="evidence" value="ECO:0000250"/>
    <property type="project" value="UniProtKB"/>
</dbReference>
<dbReference type="GO" id="GO:1900015">
    <property type="term" value="P:regulation of cytokine production involved in inflammatory response"/>
    <property type="evidence" value="ECO:0000250"/>
    <property type="project" value="UniProtKB"/>
</dbReference>
<dbReference type="GO" id="GO:0001936">
    <property type="term" value="P:regulation of endothelial cell proliferation"/>
    <property type="evidence" value="ECO:0000250"/>
    <property type="project" value="UniProtKB"/>
</dbReference>
<dbReference type="GO" id="GO:0032814">
    <property type="term" value="P:regulation of natural killer cell activation"/>
    <property type="evidence" value="ECO:0000250"/>
    <property type="project" value="UniProtKB"/>
</dbReference>
<dbReference type="GO" id="GO:0042269">
    <property type="term" value="P:regulation of natural killer cell mediated cytotoxicity"/>
    <property type="evidence" value="ECO:0000250"/>
    <property type="project" value="UniProtKB"/>
</dbReference>
<dbReference type="GO" id="GO:0032817">
    <property type="term" value="P:regulation of natural killer cell proliferation"/>
    <property type="evidence" value="ECO:0000250"/>
    <property type="project" value="UniProtKB"/>
</dbReference>
<dbReference type="GO" id="GO:0050999">
    <property type="term" value="P:regulation of nitric-oxide synthase activity"/>
    <property type="evidence" value="ECO:0000250"/>
    <property type="project" value="UniProtKB"/>
</dbReference>
<dbReference type="GO" id="GO:0032868">
    <property type="term" value="P:response to insulin"/>
    <property type="evidence" value="ECO:0000250"/>
    <property type="project" value="AgBase"/>
</dbReference>
<dbReference type="GO" id="GO:0019953">
    <property type="term" value="P:sexual reproduction"/>
    <property type="evidence" value="ECO:0000250"/>
    <property type="project" value="UniProtKB"/>
</dbReference>
<dbReference type="GO" id="GO:0030217">
    <property type="term" value="P:T cell differentiation"/>
    <property type="evidence" value="ECO:0000250"/>
    <property type="project" value="UniProtKB"/>
</dbReference>
<dbReference type="FunFam" id="1.20.1250.10:FF:000008">
    <property type="entry name" value="Leptin"/>
    <property type="match status" value="1"/>
</dbReference>
<dbReference type="Gene3D" id="1.20.1250.10">
    <property type="match status" value="1"/>
</dbReference>
<dbReference type="InterPro" id="IPR009079">
    <property type="entry name" value="4_helix_cytokine-like_core"/>
</dbReference>
<dbReference type="InterPro" id="IPR000065">
    <property type="entry name" value="Leptin"/>
</dbReference>
<dbReference type="PANTHER" id="PTHR11724">
    <property type="entry name" value="LEPTIN"/>
    <property type="match status" value="1"/>
</dbReference>
<dbReference type="PANTHER" id="PTHR11724:SF1">
    <property type="entry name" value="LEPTIN"/>
    <property type="match status" value="1"/>
</dbReference>
<dbReference type="Pfam" id="PF02024">
    <property type="entry name" value="Leptin"/>
    <property type="match status" value="1"/>
</dbReference>
<dbReference type="PIRSF" id="PIRSF001837">
    <property type="entry name" value="Leptin"/>
    <property type="match status" value="1"/>
</dbReference>
<dbReference type="PRINTS" id="PR00495">
    <property type="entry name" value="LEPTIN"/>
</dbReference>
<dbReference type="SUPFAM" id="SSF47266">
    <property type="entry name" value="4-helical cytokines"/>
    <property type="match status" value="1"/>
</dbReference>
<evidence type="ECO:0000250" key="1"/>
<evidence type="ECO:0000250" key="2">
    <source>
        <dbReference type="UniProtKB" id="P41159"/>
    </source>
</evidence>
<evidence type="ECO:0000250" key="3">
    <source>
        <dbReference type="UniProtKB" id="P41160"/>
    </source>
</evidence>
<evidence type="ECO:0000250" key="4">
    <source>
        <dbReference type="UniProtKB" id="P50596"/>
    </source>
</evidence>
<evidence type="ECO:0000255" key="5"/>
<evidence type="ECO:0000305" key="6"/>
<feature type="signal peptide" evidence="5">
    <location>
        <begin position="1"/>
        <end position="21"/>
    </location>
</feature>
<feature type="chain" id="PRO_0000235190" description="Leptin">
    <location>
        <begin position="22"/>
        <end position="167"/>
    </location>
</feature>
<feature type="disulfide bond" evidence="1">
    <location>
        <begin position="117"/>
        <end position="167"/>
    </location>
</feature>
<gene>
    <name type="primary">LEP</name>
    <name type="synonym">OB</name>
</gene>
<protein>
    <recommendedName>
        <fullName>Leptin</fullName>
    </recommendedName>
    <alternativeName>
        <fullName>Obesity factor</fullName>
    </alternativeName>
</protein>
<sequence>MRCGPLYRFLWLWPYLSYVEAVPIRKVQDDTKTLIKTIVTRINDISHTQSVSSKQRVTGLDFIPGLHPLLSLSKMDQTLAIYQQILASLPSRNVIQISNDLENLRDLLHLLAASKSCPLPQVRALESLESLGVVLEASLYSTEVVALSRLQGSLQDMLRQLDLSPGC</sequence>
<keyword id="KW-1015">Disulfide bond</keyword>
<keyword id="KW-0550">Obesity</keyword>
<keyword id="KW-1185">Reference proteome</keyword>
<keyword id="KW-0964">Secreted</keyword>
<keyword id="KW-0732">Signal</keyword>
<proteinExistence type="inferred from homology"/>
<comment type="function">
    <text evidence="2 3 4">Key player in the regulation of energy balance and body weight control. Once released into the circulation, has central and peripheral effects by binding LEPR, found in many tissues, which results in the activation of several major signaling pathways (By similarity). In the hypothalamus, acts as an appetite-regulating factor that induces a decrease in food intake and an increase in energy consumption by inducing anorexinogenic factors and suppressing orexigenic neuropeptides, also regulates bone mass and secretion of hypothalamo-pituitary-adrenal hormones. In the periphery, increases basal metabolism, influences reproductive function, regulates pancreatic beta-cell function and insulin secretion, is pro-angiogenic for endothelial cell and affects innate and adaptive immunity (By similarity). In the arcuate nucleus of the hypothalamus, activates by depolarization POMC neurons inducing FOS and SOCS3 expression to release anorexigenic peptides and inhibits by hyperpolarization NPY neurons inducing SOCS3 with a consequent reduction on release of orexigenic peptides (By similarity). In addition to its known satiety inducing effect, has a modulatory role in nutrient absorption. In the intestine, reduces glucose absorption by enterocytes by activating PKC and leading to a sequential activation of p38, PI3K and ERK signaling pathways which exerts an inhibitory effect on glucose absorption (By similarity). Acts as a growth factor on certain tissues, through the activation of different signaling pathways increases expression of genes involved in cell cycle regulation such as CCND1, via JAK2-STAT3 pathway, or VEGFA, via MAPK1/3 and PI3K-AKT1 pathways (By similarity). May also play an apoptotic role via JAK2-STAT3 pathway and up-regulation of BIRC5 expression. Pro-angiogenic, has mitogenic activity on vascular endothelial cells and plays a role in matrix remodeling by regulating the expression of matrix metalloproteinases (MMPs) and tissue inhibitors of metalloproteinases (TIMPs). In innate immunity, modulates the activity and function of neutrophils by increasing chemotaxis and the secretion of oxygen radicals. Increases phagocytosis by macrophages and enhances secretion of pro-inflammatory mediators. Increases cytotoxic ability of NK cells. Plays a pro-inflammatory role, in synergy with IL1B, by inducing NOS2 which promotes the production of IL6, IL8 and Prostaglandin E2, through a signaling pathway that involves JAK2, PI3K, MAP2K1/MEK1 and MAPK14/p38 (By similarity). In adaptive immunity, promotes the switch of memory T-cells towards T helper-1 cell immune responses (By similarity). Increases CD4(+)CD25(-) T-cell proliferation and reduces autophagy during TCR (T-cell receptor) stimulation, through MTOR signaling pathway activation and BCL2 up-regulation (By similarity).</text>
</comment>
<comment type="subcellular location">
    <subcellularLocation>
        <location evidence="2">Secreted</location>
    </subcellularLocation>
</comment>
<comment type="similarity">
    <text evidence="6">Belongs to the leptin family.</text>
</comment>
<organism>
    <name type="scientific">Capra hircus</name>
    <name type="common">Goat</name>
    <dbReference type="NCBI Taxonomy" id="9925"/>
    <lineage>
        <taxon>Eukaryota</taxon>
        <taxon>Metazoa</taxon>
        <taxon>Chordata</taxon>
        <taxon>Craniata</taxon>
        <taxon>Vertebrata</taxon>
        <taxon>Euteleostomi</taxon>
        <taxon>Mammalia</taxon>
        <taxon>Eutheria</taxon>
        <taxon>Laurasiatheria</taxon>
        <taxon>Artiodactyla</taxon>
        <taxon>Ruminantia</taxon>
        <taxon>Pecora</taxon>
        <taxon>Bovidae</taxon>
        <taxon>Caprinae</taxon>
        <taxon>Capra</taxon>
    </lineage>
</organism>
<name>LEP_CAPHI</name>
<accession>Q257X2</accession>
<reference key="1">
    <citation type="submission" date="2006-03" db="EMBL/GenBank/DDBJ databases">
        <title>Sequence of the gene coding for the goat leptin.</title>
        <authorList>
            <person name="Di Vittorio M.D."/>
        </authorList>
    </citation>
    <scope>NUCLEOTIDE SEQUENCE [GENOMIC DNA]</scope>
    <source>
        <tissue>Blood</tissue>
    </source>
</reference>